<sequence length="85" mass="9390">MSILKETKRFMVVAMFIACVFISNNMNVAVANEIGYPGMGRGDRQPGCDHGNCPPDQPANPYHRGCEKSKRCRGPDPPALPRKMI</sequence>
<keyword id="KW-1015">Disulfide bond</keyword>
<keyword id="KW-0372">Hormone</keyword>
<keyword id="KW-1185">Reference proteome</keyword>
<keyword id="KW-0964">Secreted</keyword>
<keyword id="KW-0732">Signal</keyword>
<proteinExistence type="inferred from homology"/>
<name>RLF28_ARATH</name>
<protein>
    <recommendedName>
        <fullName>Protein RALF-like 28</fullName>
    </recommendedName>
</protein>
<accession>Q9LDU1</accession>
<accession>A0MF64</accession>
<comment type="function">
    <text evidence="1">Cell signaling peptide that may regulate plant stress, growth, and development. Mediates a rapid alkalinization of extracellular space by mediating a transient increase in the cytoplasmic Ca(2+) concentration leading to a calcium-dependent signaling events through a cell surface receptor and a concomitant activation of some intracellular mitogen-activated protein kinases (By similarity).</text>
</comment>
<comment type="subcellular location">
    <subcellularLocation>
        <location evidence="1">Secreted</location>
    </subcellularLocation>
</comment>
<comment type="similarity">
    <text evidence="4">Belongs to the plant rapid alkalinization factor (RALF) family.</text>
</comment>
<comment type="sequence caution" evidence="4">
    <conflict type="erroneous termination">
        <sequence resource="EMBL-CDS" id="ABK28626"/>
    </conflict>
    <text>Extended C-terminus.</text>
</comment>
<evidence type="ECO:0000250" key="1"/>
<evidence type="ECO:0000255" key="2"/>
<evidence type="ECO:0000256" key="3">
    <source>
        <dbReference type="SAM" id="MobiDB-lite"/>
    </source>
</evidence>
<evidence type="ECO:0000305" key="4"/>
<organism>
    <name type="scientific">Arabidopsis thaliana</name>
    <name type="common">Mouse-ear cress</name>
    <dbReference type="NCBI Taxonomy" id="3702"/>
    <lineage>
        <taxon>Eukaryota</taxon>
        <taxon>Viridiplantae</taxon>
        <taxon>Streptophyta</taxon>
        <taxon>Embryophyta</taxon>
        <taxon>Tracheophyta</taxon>
        <taxon>Spermatophyta</taxon>
        <taxon>Magnoliopsida</taxon>
        <taxon>eudicotyledons</taxon>
        <taxon>Gunneridae</taxon>
        <taxon>Pentapetalae</taxon>
        <taxon>rosids</taxon>
        <taxon>malvids</taxon>
        <taxon>Brassicales</taxon>
        <taxon>Brassicaceae</taxon>
        <taxon>Camelineae</taxon>
        <taxon>Arabidopsis</taxon>
    </lineage>
</organism>
<dbReference type="EMBL" id="AL050399">
    <property type="protein sequence ID" value="CAB82156.1"/>
    <property type="molecule type" value="Genomic_DNA"/>
</dbReference>
<dbReference type="EMBL" id="AL161532">
    <property type="protein sequence ID" value="CAB78194.1"/>
    <property type="molecule type" value="Genomic_DNA"/>
</dbReference>
<dbReference type="EMBL" id="CP002687">
    <property type="protein sequence ID" value="AEE83019.1"/>
    <property type="molecule type" value="Genomic_DNA"/>
</dbReference>
<dbReference type="EMBL" id="DQ446819">
    <property type="protein sequence ID" value="ABE66056.1"/>
    <property type="molecule type" value="mRNA"/>
</dbReference>
<dbReference type="EMBL" id="DQ653190">
    <property type="protein sequence ID" value="ABK28626.1"/>
    <property type="status" value="ALT_SEQ"/>
    <property type="molecule type" value="mRNA"/>
</dbReference>
<dbReference type="PIR" id="T10571">
    <property type="entry name" value="T10571"/>
</dbReference>
<dbReference type="RefSeq" id="NP_192889.1">
    <property type="nucleotide sequence ID" value="NM_117221.2"/>
</dbReference>
<dbReference type="STRING" id="3702.Q9LDU1"/>
<dbReference type="PaxDb" id="3702-AT4G11510.1"/>
<dbReference type="EnsemblPlants" id="AT4G11510.1">
    <property type="protein sequence ID" value="AT4G11510.1"/>
    <property type="gene ID" value="AT4G11510"/>
</dbReference>
<dbReference type="GeneID" id="826756"/>
<dbReference type="Gramene" id="AT4G11510.1">
    <property type="protein sequence ID" value="AT4G11510.1"/>
    <property type="gene ID" value="AT4G11510"/>
</dbReference>
<dbReference type="KEGG" id="ath:AT4G11510"/>
<dbReference type="Araport" id="AT4G11510"/>
<dbReference type="TAIR" id="AT4G11510">
    <property type="gene designation" value="RALFL28"/>
</dbReference>
<dbReference type="HOGENOM" id="CLU_189400_0_0_1"/>
<dbReference type="InParanoid" id="Q9LDU1"/>
<dbReference type="OMA" id="CEVETRC"/>
<dbReference type="PhylomeDB" id="Q9LDU1"/>
<dbReference type="PRO" id="PR:Q9LDU1"/>
<dbReference type="Proteomes" id="UP000006548">
    <property type="component" value="Chromosome 4"/>
</dbReference>
<dbReference type="ExpressionAtlas" id="Q9LDU1">
    <property type="expression patterns" value="baseline and differential"/>
</dbReference>
<dbReference type="GO" id="GO:0048046">
    <property type="term" value="C:apoplast"/>
    <property type="evidence" value="ECO:0000250"/>
    <property type="project" value="TAIR"/>
</dbReference>
<dbReference type="GO" id="GO:0005179">
    <property type="term" value="F:hormone activity"/>
    <property type="evidence" value="ECO:0000250"/>
    <property type="project" value="UniProtKB"/>
</dbReference>
<dbReference type="GO" id="GO:0019722">
    <property type="term" value="P:calcium-mediated signaling"/>
    <property type="evidence" value="ECO:0000250"/>
    <property type="project" value="UniProtKB"/>
</dbReference>
<dbReference type="GO" id="GO:0007267">
    <property type="term" value="P:cell-cell signaling"/>
    <property type="evidence" value="ECO:0000250"/>
    <property type="project" value="TAIR"/>
</dbReference>
<dbReference type="GO" id="GO:0040008">
    <property type="term" value="P:regulation of growth"/>
    <property type="evidence" value="ECO:0007669"/>
    <property type="project" value="UniProtKB-ARBA"/>
</dbReference>
<dbReference type="InterPro" id="IPR008801">
    <property type="entry name" value="RALF"/>
</dbReference>
<dbReference type="PANTHER" id="PTHR34270">
    <property type="entry name" value="PROTEIN RALF-LIKE 15-RELATED"/>
    <property type="match status" value="1"/>
</dbReference>
<dbReference type="PANTHER" id="PTHR34270:SF3">
    <property type="entry name" value="PROTEIN RALF-LIKE 16-RELATED"/>
    <property type="match status" value="1"/>
</dbReference>
<dbReference type="Pfam" id="PF05498">
    <property type="entry name" value="RALF"/>
    <property type="match status" value="1"/>
</dbReference>
<feature type="signal peptide" evidence="2">
    <location>
        <begin position="1"/>
        <end position="31"/>
    </location>
</feature>
<feature type="chain" id="PRO_0000420326" description="Protein RALF-like 28">
    <location>
        <begin position="32"/>
        <end position="85"/>
    </location>
</feature>
<feature type="region of interest" description="Disordered" evidence="3">
    <location>
        <begin position="60"/>
        <end position="85"/>
    </location>
</feature>
<feature type="compositionally biased region" description="Pro residues" evidence="3">
    <location>
        <begin position="75"/>
        <end position="85"/>
    </location>
</feature>
<feature type="disulfide bond" evidence="1">
    <location>
        <begin position="48"/>
        <end position="53"/>
    </location>
</feature>
<feature type="disulfide bond" evidence="1">
    <location>
        <begin position="66"/>
        <end position="72"/>
    </location>
</feature>
<reference key="1">
    <citation type="journal article" date="1999" name="Nature">
        <title>Sequence and analysis of chromosome 4 of the plant Arabidopsis thaliana.</title>
        <authorList>
            <person name="Mayer K.F.X."/>
            <person name="Schueller C."/>
            <person name="Wambutt R."/>
            <person name="Murphy G."/>
            <person name="Volckaert G."/>
            <person name="Pohl T."/>
            <person name="Duesterhoeft A."/>
            <person name="Stiekema W."/>
            <person name="Entian K.-D."/>
            <person name="Terryn N."/>
            <person name="Harris B."/>
            <person name="Ansorge W."/>
            <person name="Brandt P."/>
            <person name="Grivell L.A."/>
            <person name="Rieger M."/>
            <person name="Weichselgartner M."/>
            <person name="de Simone V."/>
            <person name="Obermaier B."/>
            <person name="Mache R."/>
            <person name="Mueller M."/>
            <person name="Kreis M."/>
            <person name="Delseny M."/>
            <person name="Puigdomenech P."/>
            <person name="Watson M."/>
            <person name="Schmidtheini T."/>
            <person name="Reichert B."/>
            <person name="Portetelle D."/>
            <person name="Perez-Alonso M."/>
            <person name="Boutry M."/>
            <person name="Bancroft I."/>
            <person name="Vos P."/>
            <person name="Hoheisel J."/>
            <person name="Zimmermann W."/>
            <person name="Wedler H."/>
            <person name="Ridley P."/>
            <person name="Langham S.-A."/>
            <person name="McCullagh B."/>
            <person name="Bilham L."/>
            <person name="Robben J."/>
            <person name="van der Schueren J."/>
            <person name="Grymonprez B."/>
            <person name="Chuang Y.-J."/>
            <person name="Vandenbussche F."/>
            <person name="Braeken M."/>
            <person name="Weltjens I."/>
            <person name="Voet M."/>
            <person name="Bastiaens I."/>
            <person name="Aert R."/>
            <person name="Defoor E."/>
            <person name="Weitzenegger T."/>
            <person name="Bothe G."/>
            <person name="Ramsperger U."/>
            <person name="Hilbert H."/>
            <person name="Braun M."/>
            <person name="Holzer E."/>
            <person name="Brandt A."/>
            <person name="Peters S."/>
            <person name="van Staveren M."/>
            <person name="Dirkse W."/>
            <person name="Mooijman P."/>
            <person name="Klein Lankhorst R."/>
            <person name="Rose M."/>
            <person name="Hauf J."/>
            <person name="Koetter P."/>
            <person name="Berneiser S."/>
            <person name="Hempel S."/>
            <person name="Feldpausch M."/>
            <person name="Lamberth S."/>
            <person name="Van den Daele H."/>
            <person name="De Keyser A."/>
            <person name="Buysshaert C."/>
            <person name="Gielen J."/>
            <person name="Villarroel R."/>
            <person name="De Clercq R."/>
            <person name="van Montagu M."/>
            <person name="Rogers J."/>
            <person name="Cronin A."/>
            <person name="Quail M.A."/>
            <person name="Bray-Allen S."/>
            <person name="Clark L."/>
            <person name="Doggett J."/>
            <person name="Hall S."/>
            <person name="Kay M."/>
            <person name="Lennard N."/>
            <person name="McLay K."/>
            <person name="Mayes R."/>
            <person name="Pettett A."/>
            <person name="Rajandream M.A."/>
            <person name="Lyne M."/>
            <person name="Benes V."/>
            <person name="Rechmann S."/>
            <person name="Borkova D."/>
            <person name="Bloecker H."/>
            <person name="Scharfe M."/>
            <person name="Grimm M."/>
            <person name="Loehnert T.-H."/>
            <person name="Dose S."/>
            <person name="de Haan M."/>
            <person name="Maarse A.C."/>
            <person name="Schaefer M."/>
            <person name="Mueller-Auer S."/>
            <person name="Gabel C."/>
            <person name="Fuchs M."/>
            <person name="Fartmann B."/>
            <person name="Granderath K."/>
            <person name="Dauner D."/>
            <person name="Herzl A."/>
            <person name="Neumann S."/>
            <person name="Argiriou A."/>
            <person name="Vitale D."/>
            <person name="Liguori R."/>
            <person name="Piravandi E."/>
            <person name="Massenet O."/>
            <person name="Quigley F."/>
            <person name="Clabauld G."/>
            <person name="Muendlein A."/>
            <person name="Felber R."/>
            <person name="Schnabl S."/>
            <person name="Hiller R."/>
            <person name="Schmidt W."/>
            <person name="Lecharny A."/>
            <person name="Aubourg S."/>
            <person name="Chefdor F."/>
            <person name="Cooke R."/>
            <person name="Berger C."/>
            <person name="Monfort A."/>
            <person name="Casacuberta E."/>
            <person name="Gibbons T."/>
            <person name="Weber N."/>
            <person name="Vandenbol M."/>
            <person name="Bargues M."/>
            <person name="Terol J."/>
            <person name="Torres A."/>
            <person name="Perez-Perez A."/>
            <person name="Purnelle B."/>
            <person name="Bent E."/>
            <person name="Johnson S."/>
            <person name="Tacon D."/>
            <person name="Jesse T."/>
            <person name="Heijnen L."/>
            <person name="Schwarz S."/>
            <person name="Scholler P."/>
            <person name="Heber S."/>
            <person name="Francs P."/>
            <person name="Bielke C."/>
            <person name="Frishman D."/>
            <person name="Haase D."/>
            <person name="Lemcke K."/>
            <person name="Mewes H.-W."/>
            <person name="Stocker S."/>
            <person name="Zaccaria P."/>
            <person name="Bevan M."/>
            <person name="Wilson R.K."/>
            <person name="de la Bastide M."/>
            <person name="Habermann K."/>
            <person name="Parnell L."/>
            <person name="Dedhia N."/>
            <person name="Gnoj L."/>
            <person name="Schutz K."/>
            <person name="Huang E."/>
            <person name="Spiegel L."/>
            <person name="Sekhon M."/>
            <person name="Murray J."/>
            <person name="Sheet P."/>
            <person name="Cordes M."/>
            <person name="Abu-Threideh J."/>
            <person name="Stoneking T."/>
            <person name="Kalicki J."/>
            <person name="Graves T."/>
            <person name="Harmon G."/>
            <person name="Edwards J."/>
            <person name="Latreille P."/>
            <person name="Courtney L."/>
            <person name="Cloud J."/>
            <person name="Abbott A."/>
            <person name="Scott K."/>
            <person name="Johnson D."/>
            <person name="Minx P."/>
            <person name="Bentley D."/>
            <person name="Fulton B."/>
            <person name="Miller N."/>
            <person name="Greco T."/>
            <person name="Kemp K."/>
            <person name="Kramer J."/>
            <person name="Fulton L."/>
            <person name="Mardis E."/>
            <person name="Dante M."/>
            <person name="Pepin K."/>
            <person name="Hillier L.W."/>
            <person name="Nelson J."/>
            <person name="Spieth J."/>
            <person name="Ryan E."/>
            <person name="Andrews S."/>
            <person name="Geisel C."/>
            <person name="Layman D."/>
            <person name="Du H."/>
            <person name="Ali J."/>
            <person name="Berghoff A."/>
            <person name="Jones K."/>
            <person name="Drone K."/>
            <person name="Cotton M."/>
            <person name="Joshu C."/>
            <person name="Antonoiu B."/>
            <person name="Zidanic M."/>
            <person name="Strong C."/>
            <person name="Sun H."/>
            <person name="Lamar B."/>
            <person name="Yordan C."/>
            <person name="Ma P."/>
            <person name="Zhong J."/>
            <person name="Preston R."/>
            <person name="Vil D."/>
            <person name="Shekher M."/>
            <person name="Matero A."/>
            <person name="Shah R."/>
            <person name="Swaby I.K."/>
            <person name="O'Shaughnessy A."/>
            <person name="Rodriguez M."/>
            <person name="Hoffman J."/>
            <person name="Till S."/>
            <person name="Granat S."/>
            <person name="Shohdy N."/>
            <person name="Hasegawa A."/>
            <person name="Hameed A."/>
            <person name="Lodhi M."/>
            <person name="Johnson A."/>
            <person name="Chen E."/>
            <person name="Marra M.A."/>
            <person name="Martienssen R."/>
            <person name="McCombie W.R."/>
        </authorList>
    </citation>
    <scope>NUCLEOTIDE SEQUENCE [LARGE SCALE GENOMIC DNA]</scope>
    <source>
        <strain>cv. Columbia</strain>
    </source>
</reference>
<reference key="2">
    <citation type="journal article" date="2017" name="Plant J.">
        <title>Araport11: a complete reannotation of the Arabidopsis thaliana reference genome.</title>
        <authorList>
            <person name="Cheng C.Y."/>
            <person name="Krishnakumar V."/>
            <person name="Chan A.P."/>
            <person name="Thibaud-Nissen F."/>
            <person name="Schobel S."/>
            <person name="Town C.D."/>
        </authorList>
    </citation>
    <scope>GENOME REANNOTATION</scope>
    <source>
        <strain>cv. Columbia</strain>
    </source>
</reference>
<reference key="3">
    <citation type="journal article" date="2006" name="Plant Biotechnol. J.">
        <title>Simultaneous high-throughput recombinational cloning of open reading frames in closed and open configurations.</title>
        <authorList>
            <person name="Underwood B.A."/>
            <person name="Vanderhaeghen R."/>
            <person name="Whitford R."/>
            <person name="Town C.D."/>
            <person name="Hilson P."/>
        </authorList>
    </citation>
    <scope>NUCLEOTIDE SEQUENCE [LARGE SCALE MRNA]</scope>
    <source>
        <strain>cv. Columbia</strain>
    </source>
</reference>
<reference key="4">
    <citation type="journal article" date="2002" name="In Silico Biol.">
        <title>Peptomics, identification of novel cationic Arabidopsis peptides with conserved sequence motifs.</title>
        <authorList>
            <person name="Olsen A.N."/>
            <person name="Mundy J."/>
            <person name="Skriver K."/>
        </authorList>
    </citation>
    <scope>GENE FAMILY</scope>
    <scope>NOMENCLATURE</scope>
</reference>
<gene>
    <name type="primary">RALFL28</name>
    <name type="ordered locus">At4g11510</name>
    <name type="ORF">F25E4.130</name>
</gene>